<sequence length="200" mass="23026">MERTELLKPRTLADLIRILHELFAGDEVNVEEVQAVLEAYESNPAEWALYAKFDQYRYTRNLVDQGNGKFNLMILCWGEGHGSSIHDHTDSHCFLKLLQGNLKETLFDWPDKKSNEMIKKSERTLRENQCAYINDSIGLHRVENVSHTEPAVSLHLYSPPFDTCHAFDQRTGHKNKVTMTFHSKFGIRTPFTTSGSLENN</sequence>
<reference key="1">
    <citation type="journal article" date="2001" name="Gene">
        <title>Murine cysteine dioxygenase gene: structural organization, tissue-specific expression and promoter identification.</title>
        <authorList>
            <person name="Hirschberger L.L."/>
            <person name="Daval S."/>
            <person name="Stover P.J."/>
            <person name="Stipanuk M.H."/>
        </authorList>
    </citation>
    <scope>NUCLEOTIDE SEQUENCE [GENOMIC DNA]</scope>
    <scope>TISSUE SPECIFICITY</scope>
</reference>
<reference key="2">
    <citation type="journal article" date="2005" name="Science">
        <title>The transcriptional landscape of the mammalian genome.</title>
        <authorList>
            <person name="Carninci P."/>
            <person name="Kasukawa T."/>
            <person name="Katayama S."/>
            <person name="Gough J."/>
            <person name="Frith M.C."/>
            <person name="Maeda N."/>
            <person name="Oyama R."/>
            <person name="Ravasi T."/>
            <person name="Lenhard B."/>
            <person name="Wells C."/>
            <person name="Kodzius R."/>
            <person name="Shimokawa K."/>
            <person name="Bajic V.B."/>
            <person name="Brenner S.E."/>
            <person name="Batalov S."/>
            <person name="Forrest A.R."/>
            <person name="Zavolan M."/>
            <person name="Davis M.J."/>
            <person name="Wilming L.G."/>
            <person name="Aidinis V."/>
            <person name="Allen J.E."/>
            <person name="Ambesi-Impiombato A."/>
            <person name="Apweiler R."/>
            <person name="Aturaliya R.N."/>
            <person name="Bailey T.L."/>
            <person name="Bansal M."/>
            <person name="Baxter L."/>
            <person name="Beisel K.W."/>
            <person name="Bersano T."/>
            <person name="Bono H."/>
            <person name="Chalk A.M."/>
            <person name="Chiu K.P."/>
            <person name="Choudhary V."/>
            <person name="Christoffels A."/>
            <person name="Clutterbuck D.R."/>
            <person name="Crowe M.L."/>
            <person name="Dalla E."/>
            <person name="Dalrymple B.P."/>
            <person name="de Bono B."/>
            <person name="Della Gatta G."/>
            <person name="di Bernardo D."/>
            <person name="Down T."/>
            <person name="Engstrom P."/>
            <person name="Fagiolini M."/>
            <person name="Faulkner G."/>
            <person name="Fletcher C.F."/>
            <person name="Fukushima T."/>
            <person name="Furuno M."/>
            <person name="Futaki S."/>
            <person name="Gariboldi M."/>
            <person name="Georgii-Hemming P."/>
            <person name="Gingeras T.R."/>
            <person name="Gojobori T."/>
            <person name="Green R.E."/>
            <person name="Gustincich S."/>
            <person name="Harbers M."/>
            <person name="Hayashi Y."/>
            <person name="Hensch T.K."/>
            <person name="Hirokawa N."/>
            <person name="Hill D."/>
            <person name="Huminiecki L."/>
            <person name="Iacono M."/>
            <person name="Ikeo K."/>
            <person name="Iwama A."/>
            <person name="Ishikawa T."/>
            <person name="Jakt M."/>
            <person name="Kanapin A."/>
            <person name="Katoh M."/>
            <person name="Kawasawa Y."/>
            <person name="Kelso J."/>
            <person name="Kitamura H."/>
            <person name="Kitano H."/>
            <person name="Kollias G."/>
            <person name="Krishnan S.P."/>
            <person name="Kruger A."/>
            <person name="Kummerfeld S.K."/>
            <person name="Kurochkin I.V."/>
            <person name="Lareau L.F."/>
            <person name="Lazarevic D."/>
            <person name="Lipovich L."/>
            <person name="Liu J."/>
            <person name="Liuni S."/>
            <person name="McWilliam S."/>
            <person name="Madan Babu M."/>
            <person name="Madera M."/>
            <person name="Marchionni L."/>
            <person name="Matsuda H."/>
            <person name="Matsuzawa S."/>
            <person name="Miki H."/>
            <person name="Mignone F."/>
            <person name="Miyake S."/>
            <person name="Morris K."/>
            <person name="Mottagui-Tabar S."/>
            <person name="Mulder N."/>
            <person name="Nakano N."/>
            <person name="Nakauchi H."/>
            <person name="Ng P."/>
            <person name="Nilsson R."/>
            <person name="Nishiguchi S."/>
            <person name="Nishikawa S."/>
            <person name="Nori F."/>
            <person name="Ohara O."/>
            <person name="Okazaki Y."/>
            <person name="Orlando V."/>
            <person name="Pang K.C."/>
            <person name="Pavan W.J."/>
            <person name="Pavesi G."/>
            <person name="Pesole G."/>
            <person name="Petrovsky N."/>
            <person name="Piazza S."/>
            <person name="Reed J."/>
            <person name="Reid J.F."/>
            <person name="Ring B.Z."/>
            <person name="Ringwald M."/>
            <person name="Rost B."/>
            <person name="Ruan Y."/>
            <person name="Salzberg S.L."/>
            <person name="Sandelin A."/>
            <person name="Schneider C."/>
            <person name="Schoenbach C."/>
            <person name="Sekiguchi K."/>
            <person name="Semple C.A."/>
            <person name="Seno S."/>
            <person name="Sessa L."/>
            <person name="Sheng Y."/>
            <person name="Shibata Y."/>
            <person name="Shimada H."/>
            <person name="Shimada K."/>
            <person name="Silva D."/>
            <person name="Sinclair B."/>
            <person name="Sperling S."/>
            <person name="Stupka E."/>
            <person name="Sugiura K."/>
            <person name="Sultana R."/>
            <person name="Takenaka Y."/>
            <person name="Taki K."/>
            <person name="Tammoja K."/>
            <person name="Tan S.L."/>
            <person name="Tang S."/>
            <person name="Taylor M.S."/>
            <person name="Tegner J."/>
            <person name="Teichmann S.A."/>
            <person name="Ueda H.R."/>
            <person name="van Nimwegen E."/>
            <person name="Verardo R."/>
            <person name="Wei C.L."/>
            <person name="Yagi K."/>
            <person name="Yamanishi H."/>
            <person name="Zabarovsky E."/>
            <person name="Zhu S."/>
            <person name="Zimmer A."/>
            <person name="Hide W."/>
            <person name="Bult C."/>
            <person name="Grimmond S.M."/>
            <person name="Teasdale R.D."/>
            <person name="Liu E.T."/>
            <person name="Brusic V."/>
            <person name="Quackenbush J."/>
            <person name="Wahlestedt C."/>
            <person name="Mattick J.S."/>
            <person name="Hume D.A."/>
            <person name="Kai C."/>
            <person name="Sasaki D."/>
            <person name="Tomaru Y."/>
            <person name="Fukuda S."/>
            <person name="Kanamori-Katayama M."/>
            <person name="Suzuki M."/>
            <person name="Aoki J."/>
            <person name="Arakawa T."/>
            <person name="Iida J."/>
            <person name="Imamura K."/>
            <person name="Itoh M."/>
            <person name="Kato T."/>
            <person name="Kawaji H."/>
            <person name="Kawagashira N."/>
            <person name="Kawashima T."/>
            <person name="Kojima M."/>
            <person name="Kondo S."/>
            <person name="Konno H."/>
            <person name="Nakano K."/>
            <person name="Ninomiya N."/>
            <person name="Nishio T."/>
            <person name="Okada M."/>
            <person name="Plessy C."/>
            <person name="Shibata K."/>
            <person name="Shiraki T."/>
            <person name="Suzuki S."/>
            <person name="Tagami M."/>
            <person name="Waki K."/>
            <person name="Watahiki A."/>
            <person name="Okamura-Oho Y."/>
            <person name="Suzuki H."/>
            <person name="Kawai J."/>
            <person name="Hayashizaki Y."/>
        </authorList>
    </citation>
    <scope>NUCLEOTIDE SEQUENCE [LARGE SCALE MRNA]</scope>
    <source>
        <strain>C57BL/6J</strain>
        <tissue>Liver</tissue>
    </source>
</reference>
<reference key="3">
    <citation type="journal article" date="2004" name="Genome Res.">
        <title>The status, quality, and expansion of the NIH full-length cDNA project: the Mammalian Gene Collection (MGC).</title>
        <authorList>
            <consortium name="The MGC Project Team"/>
        </authorList>
    </citation>
    <scope>NUCLEOTIDE SEQUENCE [LARGE SCALE MRNA]</scope>
    <source>
        <strain>FVB/N</strain>
        <tissue>Liver</tissue>
    </source>
</reference>
<reference key="4">
    <citation type="journal article" date="2010" name="Cell">
        <title>A tissue-specific atlas of mouse protein phosphorylation and expression.</title>
        <authorList>
            <person name="Huttlin E.L."/>
            <person name="Jedrychowski M.P."/>
            <person name="Elias J.E."/>
            <person name="Goswami T."/>
            <person name="Rad R."/>
            <person name="Beausoleil S.A."/>
            <person name="Villen J."/>
            <person name="Haas W."/>
            <person name="Sowa M.E."/>
            <person name="Gygi S.P."/>
        </authorList>
    </citation>
    <scope>IDENTIFICATION BY MASS SPECTROMETRY [LARGE SCALE ANALYSIS]</scope>
    <source>
        <tissue>Kidney</tissue>
        <tissue>Liver</tissue>
        <tissue>Lung</tissue>
    </source>
</reference>
<reference key="5">
    <citation type="journal article" date="2006" name="Proc. Natl. Acad. Sci. U.S.A.">
        <title>Structure and mechanism of mouse cysteine dioxygenase.</title>
        <authorList>
            <person name="McCoy J.G."/>
            <person name="Bailey L.J."/>
            <person name="Bitto E."/>
            <person name="Bingman C.A."/>
            <person name="Aceti D.J."/>
            <person name="Fox B.G."/>
            <person name="Phillips G.N. Jr."/>
        </authorList>
    </citation>
    <scope>X-RAY CRYSTALLOGRAPHY (1.75 ANGSTROMS) IN COMPLEX WITH NICKEL IONS</scope>
    <scope>CROSS-LINK</scope>
    <scope>SUBUNIT</scope>
    <scope>FUNCTION</scope>
    <scope>CATALYTIC ACTIVITY</scope>
    <scope>COFACTOR</scope>
    <scope>BIOPHYSICOCHEMICAL PROPERTIES</scope>
    <scope>PTM</scope>
    <scope>IRON-BINDING SITES</scope>
</reference>
<evidence type="ECO:0000269" key="1">
    <source>
    </source>
</evidence>
<evidence type="ECO:0000269" key="2">
    <source>
    </source>
</evidence>
<evidence type="ECO:0000305" key="3"/>
<evidence type="ECO:0000305" key="4">
    <source>
    </source>
</evidence>
<evidence type="ECO:0007829" key="5">
    <source>
        <dbReference type="PDB" id="2ATF"/>
    </source>
</evidence>
<evidence type="ECO:0007829" key="6">
    <source>
        <dbReference type="PDB" id="2Q4S"/>
    </source>
</evidence>
<name>CDO1_MOUSE</name>
<proteinExistence type="evidence at protein level"/>
<comment type="function">
    <text evidence="2">Catalyzes the oxidation of cysteine to cysteine sulfinic acid with addition of molecular dioxygen.</text>
</comment>
<comment type="catalytic activity">
    <reaction evidence="2">
        <text>L-cysteine + O2 = 3-sulfino-L-alanine + H(+)</text>
        <dbReference type="Rhea" id="RHEA:20441"/>
        <dbReference type="ChEBI" id="CHEBI:15378"/>
        <dbReference type="ChEBI" id="CHEBI:15379"/>
        <dbReference type="ChEBI" id="CHEBI:35235"/>
        <dbReference type="ChEBI" id="CHEBI:61085"/>
        <dbReference type="EC" id="1.13.11.20"/>
    </reaction>
    <physiologicalReaction direction="left-to-right" evidence="4">
        <dbReference type="Rhea" id="RHEA:20442"/>
    </physiologicalReaction>
</comment>
<comment type="cofactor">
    <cofactor evidence="2">
        <name>Fe(2+)</name>
        <dbReference type="ChEBI" id="CHEBI:29033"/>
    </cofactor>
    <cofactor evidence="2">
        <name>Ni(2+)</name>
        <dbReference type="ChEBI" id="CHEBI:49786"/>
    </cofactor>
    <cofactor evidence="2">
        <name>Zn(2+)</name>
        <dbReference type="ChEBI" id="CHEBI:29105"/>
    </cofactor>
    <text evidence="2">Binds 1 Fe(2+) cation per subunit. Ni(2+) and Zn(2+) can be used to a lesser extent.</text>
</comment>
<comment type="biophysicochemical properties">
    <kinetics>
        <KM evidence="2">3.4 mM for L-cysteine</KM>
    </kinetics>
</comment>
<comment type="pathway">
    <text>Organosulfur biosynthesis; taurine biosynthesis; hypotaurine from L-cysteine: step 1/2.</text>
</comment>
<comment type="subunit">
    <text evidence="2">Monomer.</text>
</comment>
<comment type="tissue specificity">
    <text evidence="1">Highest expression in liver. Also expressed in kidney, lung, brain and small intestine.</text>
</comment>
<comment type="PTM">
    <text evidence="2">The thioether cross-link between Cys-93 and Tyr-157 plays a structural role through stabilizing the Fe(2+) ion, and prevents the production of highly damaging free hydroxyl radicals by holding the oxygen radical via hydroxyl hydrogen.</text>
</comment>
<comment type="similarity">
    <text evidence="3">Belongs to the cysteine dioxygenase family.</text>
</comment>
<organism>
    <name type="scientific">Mus musculus</name>
    <name type="common">Mouse</name>
    <dbReference type="NCBI Taxonomy" id="10090"/>
    <lineage>
        <taxon>Eukaryota</taxon>
        <taxon>Metazoa</taxon>
        <taxon>Chordata</taxon>
        <taxon>Craniata</taxon>
        <taxon>Vertebrata</taxon>
        <taxon>Euteleostomi</taxon>
        <taxon>Mammalia</taxon>
        <taxon>Eutheria</taxon>
        <taxon>Euarchontoglires</taxon>
        <taxon>Glires</taxon>
        <taxon>Rodentia</taxon>
        <taxon>Myomorpha</taxon>
        <taxon>Muroidea</taxon>
        <taxon>Muridae</taxon>
        <taxon>Murinae</taxon>
        <taxon>Mus</taxon>
        <taxon>Mus</taxon>
    </lineage>
</organism>
<feature type="chain" id="PRO_0000206607" description="Cysteine dioxygenase type 1">
    <location>
        <begin position="1"/>
        <end position="200"/>
    </location>
</feature>
<feature type="binding site" evidence="2">
    <location>
        <position position="86"/>
    </location>
    <ligand>
        <name>Fe cation</name>
        <dbReference type="ChEBI" id="CHEBI:24875"/>
        <note>catalytic</note>
    </ligand>
</feature>
<feature type="binding site" evidence="2">
    <location>
        <position position="88"/>
    </location>
    <ligand>
        <name>Fe cation</name>
        <dbReference type="ChEBI" id="CHEBI:24875"/>
        <note>catalytic</note>
    </ligand>
</feature>
<feature type="binding site" evidence="2">
    <location>
        <position position="140"/>
    </location>
    <ligand>
        <name>Fe cation</name>
        <dbReference type="ChEBI" id="CHEBI:24875"/>
        <note>catalytic</note>
    </ligand>
</feature>
<feature type="cross-link" description="3'-(S-cysteinyl)-tyrosine (Cys-Tyr)" evidence="2">
    <location>
        <begin position="93"/>
        <end position="157"/>
    </location>
</feature>
<feature type="helix" evidence="5">
    <location>
        <begin position="12"/>
        <end position="22"/>
    </location>
</feature>
<feature type="strand" evidence="5">
    <location>
        <begin position="24"/>
        <end position="27"/>
    </location>
</feature>
<feature type="helix" evidence="5">
    <location>
        <begin position="30"/>
        <end position="39"/>
    </location>
</feature>
<feature type="helix" evidence="5">
    <location>
        <begin position="44"/>
        <end position="47"/>
    </location>
</feature>
<feature type="helix" evidence="5">
    <location>
        <begin position="48"/>
        <end position="50"/>
    </location>
</feature>
<feature type="strand" evidence="5">
    <location>
        <begin position="55"/>
        <end position="57"/>
    </location>
</feature>
<feature type="strand" evidence="5">
    <location>
        <begin position="59"/>
        <end position="64"/>
    </location>
</feature>
<feature type="helix" evidence="5">
    <location>
        <begin position="66"/>
        <end position="68"/>
    </location>
</feature>
<feature type="strand" evidence="5">
    <location>
        <begin position="71"/>
        <end position="77"/>
    </location>
</feature>
<feature type="strand" evidence="5">
    <location>
        <begin position="92"/>
        <end position="100"/>
    </location>
</feature>
<feature type="strand" evidence="5">
    <location>
        <begin position="102"/>
        <end position="107"/>
    </location>
</feature>
<feature type="strand" evidence="6">
    <location>
        <begin position="112"/>
        <end position="114"/>
    </location>
</feature>
<feature type="strand" evidence="5">
    <location>
        <begin position="121"/>
        <end position="125"/>
    </location>
</feature>
<feature type="strand" evidence="5">
    <location>
        <begin position="130"/>
        <end position="133"/>
    </location>
</feature>
<feature type="turn" evidence="5">
    <location>
        <begin position="135"/>
        <end position="137"/>
    </location>
</feature>
<feature type="strand" evidence="5">
    <location>
        <begin position="139"/>
        <end position="143"/>
    </location>
</feature>
<feature type="strand" evidence="5">
    <location>
        <begin position="151"/>
        <end position="159"/>
    </location>
</feature>
<feature type="strand" evidence="5">
    <location>
        <begin position="162"/>
        <end position="167"/>
    </location>
</feature>
<feature type="turn" evidence="5">
    <location>
        <begin position="169"/>
        <end position="171"/>
    </location>
</feature>
<feature type="strand" evidence="5">
    <location>
        <begin position="174"/>
        <end position="178"/>
    </location>
</feature>
<feature type="strand" evidence="5">
    <location>
        <begin position="182"/>
        <end position="184"/>
    </location>
</feature>
<dbReference type="EC" id="1.13.11.20" evidence="2"/>
<dbReference type="EMBL" id="AF355472">
    <property type="protein sequence ID" value="AAK53364.1"/>
    <property type="molecule type" value="Genomic_DNA"/>
</dbReference>
<dbReference type="EMBL" id="AF355469">
    <property type="protein sequence ID" value="AAK53364.1"/>
    <property type="status" value="JOINED"/>
    <property type="molecule type" value="Genomic_DNA"/>
</dbReference>
<dbReference type="EMBL" id="AF355470">
    <property type="protein sequence ID" value="AAK53364.1"/>
    <property type="status" value="JOINED"/>
    <property type="molecule type" value="Genomic_DNA"/>
</dbReference>
<dbReference type="EMBL" id="AF355471">
    <property type="protein sequence ID" value="AAK53364.1"/>
    <property type="status" value="JOINED"/>
    <property type="molecule type" value="Genomic_DNA"/>
</dbReference>
<dbReference type="EMBL" id="AK004249">
    <property type="protein sequence ID" value="BAB23236.1"/>
    <property type="molecule type" value="mRNA"/>
</dbReference>
<dbReference type="EMBL" id="AK149582">
    <property type="protein sequence ID" value="BAE28973.1"/>
    <property type="molecule type" value="mRNA"/>
</dbReference>
<dbReference type="EMBL" id="BC013638">
    <property type="protein sequence ID" value="AAH13638.1"/>
    <property type="molecule type" value="mRNA"/>
</dbReference>
<dbReference type="CCDS" id="CCDS29234.1"/>
<dbReference type="RefSeq" id="NP_149026.1">
    <property type="nucleotide sequence ID" value="NM_033037.4"/>
</dbReference>
<dbReference type="PDB" id="2ATF">
    <property type="method" value="X-ray"/>
    <property type="resolution" value="1.75 A"/>
    <property type="chains" value="A=2-200"/>
</dbReference>
<dbReference type="PDB" id="2Q4S">
    <property type="method" value="X-ray"/>
    <property type="resolution" value="1.75 A"/>
    <property type="chains" value="A=2-200"/>
</dbReference>
<dbReference type="PDBsum" id="2ATF"/>
<dbReference type="PDBsum" id="2Q4S"/>
<dbReference type="SMR" id="P60334"/>
<dbReference type="FunCoup" id="P60334">
    <property type="interactions" value="289"/>
</dbReference>
<dbReference type="IntAct" id="P60334">
    <property type="interactions" value="1"/>
</dbReference>
<dbReference type="STRING" id="10090.ENSMUSP00000046517"/>
<dbReference type="iPTMnet" id="P60334"/>
<dbReference type="PhosphoSitePlus" id="P60334"/>
<dbReference type="SwissPalm" id="P60334"/>
<dbReference type="REPRODUCTION-2DPAGE" id="P60334"/>
<dbReference type="jPOST" id="P60334"/>
<dbReference type="PaxDb" id="10090-ENSMUSP00000046517"/>
<dbReference type="PeptideAtlas" id="P60334"/>
<dbReference type="ProteomicsDB" id="279992"/>
<dbReference type="Antibodypedia" id="25433">
    <property type="antibodies" value="168 antibodies from 29 providers"/>
</dbReference>
<dbReference type="DNASU" id="12583"/>
<dbReference type="Ensembl" id="ENSMUST00000035804.9">
    <property type="protein sequence ID" value="ENSMUSP00000046517.8"/>
    <property type="gene ID" value="ENSMUSG00000033022.9"/>
</dbReference>
<dbReference type="GeneID" id="12583"/>
<dbReference type="KEGG" id="mmu:12583"/>
<dbReference type="UCSC" id="uc008evt.1">
    <property type="organism name" value="mouse"/>
</dbReference>
<dbReference type="AGR" id="MGI:105925"/>
<dbReference type="CTD" id="1036"/>
<dbReference type="MGI" id="MGI:105925">
    <property type="gene designation" value="Cdo1"/>
</dbReference>
<dbReference type="VEuPathDB" id="HostDB:ENSMUSG00000033022"/>
<dbReference type="eggNOG" id="KOG4064">
    <property type="taxonomic scope" value="Eukaryota"/>
</dbReference>
<dbReference type="GeneTree" id="ENSGT00390000018226"/>
<dbReference type="HOGENOM" id="CLU_079443_1_0_1"/>
<dbReference type="InParanoid" id="P60334"/>
<dbReference type="OMA" id="YTENQVT"/>
<dbReference type="OrthoDB" id="543511at2759"/>
<dbReference type="PhylomeDB" id="P60334"/>
<dbReference type="TreeFam" id="TF105636"/>
<dbReference type="BRENDA" id="1.13.11.20">
    <property type="organism ID" value="3474"/>
</dbReference>
<dbReference type="Reactome" id="R-MMU-1614558">
    <property type="pathway name" value="Degradation of cysteine and homocysteine"/>
</dbReference>
<dbReference type="UniPathway" id="UPA00012">
    <property type="reaction ID" value="UER00537"/>
</dbReference>
<dbReference type="BioGRID-ORCS" id="12583">
    <property type="hits" value="3 hits in 78 CRISPR screens"/>
</dbReference>
<dbReference type="ChiTaRS" id="Cdo1">
    <property type="organism name" value="mouse"/>
</dbReference>
<dbReference type="EvolutionaryTrace" id="P60334"/>
<dbReference type="PRO" id="PR:P60334"/>
<dbReference type="Proteomes" id="UP000000589">
    <property type="component" value="Chromosome 18"/>
</dbReference>
<dbReference type="RNAct" id="P60334">
    <property type="molecule type" value="protein"/>
</dbReference>
<dbReference type="Bgee" id="ENSMUSG00000033022">
    <property type="expression patterns" value="Expressed in seminal vesicle and 243 other cell types or tissues"/>
</dbReference>
<dbReference type="ExpressionAtlas" id="P60334">
    <property type="expression patterns" value="baseline and differential"/>
</dbReference>
<dbReference type="GO" id="GO:0005829">
    <property type="term" value="C:cytosol"/>
    <property type="evidence" value="ECO:0000314"/>
    <property type="project" value="MGI"/>
</dbReference>
<dbReference type="GO" id="GO:0005886">
    <property type="term" value="C:plasma membrane"/>
    <property type="evidence" value="ECO:0000304"/>
    <property type="project" value="Reactome"/>
</dbReference>
<dbReference type="GO" id="GO:0017172">
    <property type="term" value="F:cysteine dioxygenase activity"/>
    <property type="evidence" value="ECO:0000314"/>
    <property type="project" value="UniProtKB"/>
</dbReference>
<dbReference type="GO" id="GO:0008198">
    <property type="term" value="F:ferrous iron binding"/>
    <property type="evidence" value="ECO:0000314"/>
    <property type="project" value="UniProtKB"/>
</dbReference>
<dbReference type="GO" id="GO:0016151">
    <property type="term" value="F:nickel cation binding"/>
    <property type="evidence" value="ECO:0000314"/>
    <property type="project" value="UniProtKB"/>
</dbReference>
<dbReference type="GO" id="GO:0008270">
    <property type="term" value="F:zinc ion binding"/>
    <property type="evidence" value="ECO:0000314"/>
    <property type="project" value="UniProtKB"/>
</dbReference>
<dbReference type="GO" id="GO:0019452">
    <property type="term" value="P:L-cysteine catabolic process to taurine"/>
    <property type="evidence" value="ECO:0000304"/>
    <property type="project" value="MGI"/>
</dbReference>
<dbReference type="GO" id="GO:0007595">
    <property type="term" value="P:lactation"/>
    <property type="evidence" value="ECO:0007669"/>
    <property type="project" value="Ensembl"/>
</dbReference>
<dbReference type="GO" id="GO:0043200">
    <property type="term" value="P:response to amino acid"/>
    <property type="evidence" value="ECO:0007669"/>
    <property type="project" value="Ensembl"/>
</dbReference>
<dbReference type="GO" id="GO:0097184">
    <property type="term" value="P:response to azide"/>
    <property type="evidence" value="ECO:0007669"/>
    <property type="project" value="Ensembl"/>
</dbReference>
<dbReference type="GO" id="GO:0051591">
    <property type="term" value="P:response to cAMP"/>
    <property type="evidence" value="ECO:0007669"/>
    <property type="project" value="Ensembl"/>
</dbReference>
<dbReference type="GO" id="GO:0045471">
    <property type="term" value="P:response to ethanol"/>
    <property type="evidence" value="ECO:0007669"/>
    <property type="project" value="Ensembl"/>
</dbReference>
<dbReference type="GO" id="GO:0033762">
    <property type="term" value="P:response to glucagon"/>
    <property type="evidence" value="ECO:0007669"/>
    <property type="project" value="Ensembl"/>
</dbReference>
<dbReference type="GO" id="GO:0051384">
    <property type="term" value="P:response to glucocorticoid"/>
    <property type="evidence" value="ECO:0007669"/>
    <property type="project" value="Ensembl"/>
</dbReference>
<dbReference type="GO" id="GO:0042412">
    <property type="term" value="P:taurine biosynthetic process"/>
    <property type="evidence" value="ECO:0007669"/>
    <property type="project" value="UniProtKB-UniPathway"/>
</dbReference>
<dbReference type="GO" id="GO:0019530">
    <property type="term" value="P:taurine metabolic process"/>
    <property type="evidence" value="ECO:0000304"/>
    <property type="project" value="MGI"/>
</dbReference>
<dbReference type="CDD" id="cd10548">
    <property type="entry name" value="cupin_CDO"/>
    <property type="match status" value="1"/>
</dbReference>
<dbReference type="FunFam" id="2.60.120.10:FF:000045">
    <property type="entry name" value="Cysteine dioxygenase 1"/>
    <property type="match status" value="1"/>
</dbReference>
<dbReference type="Gene3D" id="2.60.120.10">
    <property type="entry name" value="Jelly Rolls"/>
    <property type="match status" value="1"/>
</dbReference>
<dbReference type="InterPro" id="IPR010300">
    <property type="entry name" value="CDO_1"/>
</dbReference>
<dbReference type="InterPro" id="IPR014710">
    <property type="entry name" value="RmlC-like_jellyroll"/>
</dbReference>
<dbReference type="InterPro" id="IPR011051">
    <property type="entry name" value="RmlC_Cupin_sf"/>
</dbReference>
<dbReference type="PANTHER" id="PTHR12918">
    <property type="entry name" value="CYSTEINE DIOXYGENASE"/>
    <property type="match status" value="1"/>
</dbReference>
<dbReference type="PANTHER" id="PTHR12918:SF1">
    <property type="entry name" value="CYSTEINE DIOXYGENASE TYPE 1"/>
    <property type="match status" value="1"/>
</dbReference>
<dbReference type="Pfam" id="PF05995">
    <property type="entry name" value="CDO_I"/>
    <property type="match status" value="1"/>
</dbReference>
<dbReference type="SUPFAM" id="SSF51182">
    <property type="entry name" value="RmlC-like cupins"/>
    <property type="match status" value="1"/>
</dbReference>
<accession>P60334</accession>
<accession>Q3UED8</accession>
<keyword id="KW-0002">3D-structure</keyword>
<keyword id="KW-0223">Dioxygenase</keyword>
<keyword id="KW-0408">Iron</keyword>
<keyword id="KW-0479">Metal-binding</keyword>
<keyword id="KW-0560">Oxidoreductase</keyword>
<keyword id="KW-1185">Reference proteome</keyword>
<keyword id="KW-0883">Thioether bond</keyword>
<gene>
    <name type="primary">Cdo1</name>
</gene>
<protein>
    <recommendedName>
        <fullName>Cysteine dioxygenase type 1</fullName>
        <ecNumber evidence="2">1.13.11.20</ecNumber>
    </recommendedName>
    <alternativeName>
        <fullName>Cysteine dioxygenase type I</fullName>
        <shortName>CDO</shortName>
        <shortName>CDO-I</shortName>
    </alternativeName>
</protein>